<accession>Q9ERM3</accession>
<dbReference type="EC" id="2.3.1.20" evidence="1"/>
<dbReference type="EC" id="2.3.1.76"/>
<dbReference type="EMBL" id="AF296131">
    <property type="protein sequence ID" value="AAG10084.1"/>
    <property type="molecule type" value="mRNA"/>
</dbReference>
<dbReference type="RefSeq" id="NP_445889.1">
    <property type="nucleotide sequence ID" value="NM_053437.1"/>
</dbReference>
<dbReference type="SMR" id="Q9ERM3"/>
<dbReference type="FunCoup" id="Q9ERM3">
    <property type="interactions" value="946"/>
</dbReference>
<dbReference type="STRING" id="10116.ENSRNOP00000035110"/>
<dbReference type="BindingDB" id="Q9ERM3"/>
<dbReference type="ChEMBL" id="CHEMBL6129"/>
<dbReference type="PhosphoSitePlus" id="Q9ERM3"/>
<dbReference type="PaxDb" id="10116-ENSRNOP00000035110"/>
<dbReference type="PeptideAtlas" id="Q9ERM3"/>
<dbReference type="GeneID" id="84497"/>
<dbReference type="KEGG" id="rno:84497"/>
<dbReference type="UCSC" id="RGD:628673">
    <property type="organism name" value="rat"/>
</dbReference>
<dbReference type="AGR" id="RGD:628673"/>
<dbReference type="CTD" id="8694"/>
<dbReference type="RGD" id="628673">
    <property type="gene designation" value="Dgat1"/>
</dbReference>
<dbReference type="eggNOG" id="KOG0380">
    <property type="taxonomic scope" value="Eukaryota"/>
</dbReference>
<dbReference type="InParanoid" id="Q9ERM3"/>
<dbReference type="PhylomeDB" id="Q9ERM3"/>
<dbReference type="BRENDA" id="2.3.1.20">
    <property type="organism ID" value="5301"/>
</dbReference>
<dbReference type="Reactome" id="R-RNO-1482883">
    <property type="pathway name" value="Acyl chain remodeling of DAG and TAG"/>
</dbReference>
<dbReference type="Reactome" id="R-RNO-6798695">
    <property type="pathway name" value="Neutrophil degranulation"/>
</dbReference>
<dbReference type="Reactome" id="R-RNO-75109">
    <property type="pathway name" value="Triglyceride biosynthesis"/>
</dbReference>
<dbReference type="UniPathway" id="UPA00230"/>
<dbReference type="PRO" id="PR:Q9ERM3"/>
<dbReference type="Proteomes" id="UP000002494">
    <property type="component" value="Unplaced"/>
</dbReference>
<dbReference type="GO" id="GO:0005789">
    <property type="term" value="C:endoplasmic reticulum membrane"/>
    <property type="evidence" value="ECO:0000266"/>
    <property type="project" value="RGD"/>
</dbReference>
<dbReference type="GO" id="GO:0043231">
    <property type="term" value="C:intracellular membrane-bounded organelle"/>
    <property type="evidence" value="ECO:0000266"/>
    <property type="project" value="RGD"/>
</dbReference>
<dbReference type="GO" id="GO:0016020">
    <property type="term" value="C:membrane"/>
    <property type="evidence" value="ECO:0000250"/>
    <property type="project" value="UniProtKB"/>
</dbReference>
<dbReference type="GO" id="GO:0003846">
    <property type="term" value="F:2-acylglycerol O-acyltransferase activity"/>
    <property type="evidence" value="ECO:0000266"/>
    <property type="project" value="RGD"/>
</dbReference>
<dbReference type="GO" id="GO:0016746">
    <property type="term" value="F:acyltransferase activity"/>
    <property type="evidence" value="ECO:0000315"/>
    <property type="project" value="RGD"/>
</dbReference>
<dbReference type="GO" id="GO:0019992">
    <property type="term" value="F:diacylglycerol binding"/>
    <property type="evidence" value="ECO:0000314"/>
    <property type="project" value="RGD"/>
</dbReference>
<dbReference type="GO" id="GO:0004144">
    <property type="term" value="F:diacylglycerol O-acyltransferase activity"/>
    <property type="evidence" value="ECO:0000314"/>
    <property type="project" value="RGD"/>
</dbReference>
<dbReference type="GO" id="GO:0005504">
    <property type="term" value="F:fatty acid binding"/>
    <property type="evidence" value="ECO:0000314"/>
    <property type="project" value="RGD"/>
</dbReference>
<dbReference type="GO" id="GO:0042802">
    <property type="term" value="F:identical protein binding"/>
    <property type="evidence" value="ECO:0000266"/>
    <property type="project" value="RGD"/>
</dbReference>
<dbReference type="GO" id="GO:0050252">
    <property type="term" value="F:retinol O-fatty-acyltransferase activity"/>
    <property type="evidence" value="ECO:0000266"/>
    <property type="project" value="RGD"/>
</dbReference>
<dbReference type="GO" id="GO:0046339">
    <property type="term" value="P:diacylglycerol metabolic process"/>
    <property type="evidence" value="ECO:0000250"/>
    <property type="project" value="UniProtKB"/>
</dbReference>
<dbReference type="GO" id="GO:0055089">
    <property type="term" value="P:fatty acid homeostasis"/>
    <property type="evidence" value="ECO:0000266"/>
    <property type="project" value="RGD"/>
</dbReference>
<dbReference type="GO" id="GO:0046486">
    <property type="term" value="P:glycerolipid metabolic process"/>
    <property type="evidence" value="ECO:0000314"/>
    <property type="project" value="RGD"/>
</dbReference>
<dbReference type="GO" id="GO:0030073">
    <property type="term" value="P:insulin secretion"/>
    <property type="evidence" value="ECO:0000315"/>
    <property type="project" value="RGD"/>
</dbReference>
<dbReference type="GO" id="GO:1902224">
    <property type="term" value="P:ketone body metabolic process"/>
    <property type="evidence" value="ECO:0000315"/>
    <property type="project" value="RGD"/>
</dbReference>
<dbReference type="GO" id="GO:0019915">
    <property type="term" value="P:lipid storage"/>
    <property type="evidence" value="ECO:0000266"/>
    <property type="project" value="RGD"/>
</dbReference>
<dbReference type="GO" id="GO:0035336">
    <property type="term" value="P:long-chain fatty-acyl-CoA metabolic process"/>
    <property type="evidence" value="ECO:0000266"/>
    <property type="project" value="RGD"/>
</dbReference>
<dbReference type="GO" id="GO:0006640">
    <property type="term" value="P:monoacylglycerol biosynthetic process"/>
    <property type="evidence" value="ECO:0000250"/>
    <property type="project" value="UniProtKB"/>
</dbReference>
<dbReference type="GO" id="GO:0046321">
    <property type="term" value="P:positive regulation of fatty acid oxidation"/>
    <property type="evidence" value="ECO:0000315"/>
    <property type="project" value="RGD"/>
</dbReference>
<dbReference type="GO" id="GO:2000491">
    <property type="term" value="P:positive regulation of hepatic stellate cell activation"/>
    <property type="evidence" value="ECO:0000315"/>
    <property type="project" value="RGD"/>
</dbReference>
<dbReference type="GO" id="GO:0010867">
    <property type="term" value="P:positive regulation of triglyceride biosynthetic process"/>
    <property type="evidence" value="ECO:0000315"/>
    <property type="project" value="RGD"/>
</dbReference>
<dbReference type="GO" id="GO:1903998">
    <property type="term" value="P:regulation of eating behavior"/>
    <property type="evidence" value="ECO:0000315"/>
    <property type="project" value="RGD"/>
</dbReference>
<dbReference type="GO" id="GO:1904729">
    <property type="term" value="P:regulation of intestinal lipid absorption"/>
    <property type="evidence" value="ECO:0000315"/>
    <property type="project" value="RGD"/>
</dbReference>
<dbReference type="GO" id="GO:1901738">
    <property type="term" value="P:regulation of vitamin A metabolic process"/>
    <property type="evidence" value="ECO:0000315"/>
    <property type="project" value="RGD"/>
</dbReference>
<dbReference type="GO" id="GO:0044752">
    <property type="term" value="P:response to human chorionic gonadotropin"/>
    <property type="evidence" value="ECO:0000270"/>
    <property type="project" value="RGD"/>
</dbReference>
<dbReference type="GO" id="GO:0001523">
    <property type="term" value="P:retinoid metabolic process"/>
    <property type="evidence" value="ECO:0000266"/>
    <property type="project" value="RGD"/>
</dbReference>
<dbReference type="GO" id="GO:0019432">
    <property type="term" value="P:triglyceride biosynthetic process"/>
    <property type="evidence" value="ECO:0000314"/>
    <property type="project" value="RGD"/>
</dbReference>
<dbReference type="GO" id="GO:0034379">
    <property type="term" value="P:very-low-density lipoprotein particle assembly"/>
    <property type="evidence" value="ECO:0000266"/>
    <property type="project" value="RGD"/>
</dbReference>
<dbReference type="InterPro" id="IPR027251">
    <property type="entry name" value="Diacylglycerol_acylTrfase1"/>
</dbReference>
<dbReference type="InterPro" id="IPR004299">
    <property type="entry name" value="MBOAT_fam"/>
</dbReference>
<dbReference type="InterPro" id="IPR014371">
    <property type="entry name" value="Oat_ACAT_DAG_ARE"/>
</dbReference>
<dbReference type="PANTHER" id="PTHR10408:SF7">
    <property type="entry name" value="DIACYLGLYCEROL O-ACYLTRANSFERASE 1"/>
    <property type="match status" value="1"/>
</dbReference>
<dbReference type="PANTHER" id="PTHR10408">
    <property type="entry name" value="STEROL O-ACYLTRANSFERASE"/>
    <property type="match status" value="1"/>
</dbReference>
<dbReference type="Pfam" id="PF03062">
    <property type="entry name" value="MBOAT"/>
    <property type="match status" value="1"/>
</dbReference>
<dbReference type="PIRSF" id="PIRSF000439">
    <property type="entry name" value="Oat_ACAT_DAG_ARE"/>
    <property type="match status" value="1"/>
</dbReference>
<dbReference type="PIRSF" id="PIRSF500231">
    <property type="entry name" value="Oat_dag"/>
    <property type="match status" value="1"/>
</dbReference>
<comment type="function">
    <text evidence="1 2 3">Catalyzes the terminal and only committed step in triacylglycerol synthesis by using diacylglycerol and fatty acyl CoA as substrates. Highly expressed in epithelial cells of the small intestine and its activity is essential for the absorption of dietary fats. In liver, plays a role in esterifying exogenous fatty acids to glycerol, and is required to synthesize fat for storage (By similarity). Also present in female mammary glands, where it produces fat in the milk (By similarity). May be involved in VLDL (very low density lipoprotein) assembly (By similarity). In contrast to DGAT2 it is not essential for survival (By similarity). Functions as the major acyl-CoA retinol acyltransferase (ARAT) in the skin, where it acts to maintain retinoid homeostasis and prevent retinoid toxicity leading to skin and hair disorders (By similarity). Exhibits additional acyltransferase activities, includin acyl CoA:monoacylglycerol acyltransferase (MGAT), wax monoester and wax diester synthases (By similarity). Also able to use 1-monoalkylglycerol (1-MAkG) as an acyl acceptor for the synthesis of monoalkyl-monoacylglycerol (MAMAG) (By similarity).</text>
</comment>
<comment type="catalytic activity">
    <reaction evidence="1">
        <text>an acyl-CoA + a 1,2-diacyl-sn-glycerol = a triacyl-sn-glycerol + CoA</text>
        <dbReference type="Rhea" id="RHEA:10868"/>
        <dbReference type="ChEBI" id="CHEBI:17815"/>
        <dbReference type="ChEBI" id="CHEBI:57287"/>
        <dbReference type="ChEBI" id="CHEBI:58342"/>
        <dbReference type="ChEBI" id="CHEBI:64615"/>
        <dbReference type="EC" id="2.3.1.20"/>
    </reaction>
    <physiologicalReaction direction="left-to-right" evidence="1">
        <dbReference type="Rhea" id="RHEA:10869"/>
    </physiologicalReaction>
</comment>
<comment type="catalytic activity">
    <reaction evidence="1">
        <text>all-trans-retinol + an acyl-CoA = an all-trans-retinyl ester + CoA</text>
        <dbReference type="Rhea" id="RHEA:11488"/>
        <dbReference type="ChEBI" id="CHEBI:17336"/>
        <dbReference type="ChEBI" id="CHEBI:57287"/>
        <dbReference type="ChEBI" id="CHEBI:58342"/>
        <dbReference type="ChEBI" id="CHEBI:63410"/>
        <dbReference type="EC" id="2.3.1.76"/>
    </reaction>
    <physiologicalReaction direction="left-to-right" evidence="1">
        <dbReference type="Rhea" id="RHEA:11489"/>
    </physiologicalReaction>
</comment>
<comment type="catalytic activity">
    <reaction evidence="1">
        <text>2-(9Z-octadecenoyl)-glycerol + (9Z)-octadecenoyl-CoA = 1,2-di-(9Z-octadecenoyl)-sn-glycerol + CoA</text>
        <dbReference type="Rhea" id="RHEA:37911"/>
        <dbReference type="ChEBI" id="CHEBI:52333"/>
        <dbReference type="ChEBI" id="CHEBI:57287"/>
        <dbReference type="ChEBI" id="CHEBI:57387"/>
        <dbReference type="ChEBI" id="CHEBI:73990"/>
    </reaction>
    <physiologicalReaction direction="left-to-right" evidence="1">
        <dbReference type="Rhea" id="RHEA:37912"/>
    </physiologicalReaction>
</comment>
<comment type="catalytic activity">
    <reaction evidence="1">
        <text>1,2-di-(9Z-octadecenoyl)-sn-glycerol + (9Z)-octadecenoyl-CoA = 1,2,3-tri-(9Z-octadecenoyl)-glycerol + CoA</text>
        <dbReference type="Rhea" id="RHEA:38219"/>
        <dbReference type="ChEBI" id="CHEBI:52333"/>
        <dbReference type="ChEBI" id="CHEBI:53753"/>
        <dbReference type="ChEBI" id="CHEBI:57287"/>
        <dbReference type="ChEBI" id="CHEBI:57387"/>
    </reaction>
    <physiologicalReaction direction="left-to-right" evidence="1">
        <dbReference type="Rhea" id="RHEA:38220"/>
    </physiologicalReaction>
</comment>
<comment type="catalytic activity">
    <reaction evidence="1 3">
        <text>all-trans-retinol + hexadecanoyl-CoA = all-trans-retinyl hexadecanoate + CoA</text>
        <dbReference type="Rhea" id="RHEA:38175"/>
        <dbReference type="ChEBI" id="CHEBI:17336"/>
        <dbReference type="ChEBI" id="CHEBI:17616"/>
        <dbReference type="ChEBI" id="CHEBI:57287"/>
        <dbReference type="ChEBI" id="CHEBI:57379"/>
    </reaction>
    <physiologicalReaction direction="left-to-right" evidence="1 3">
        <dbReference type="Rhea" id="RHEA:38176"/>
    </physiologicalReaction>
</comment>
<comment type="catalytic activity">
    <reaction evidence="1">
        <text>1-O-(9Z-octadecenyl)-glycerol + (9Z)-octadecenoyl-CoA = 1-O-(9Z-octadecyl)-3-(9Z-octadecenoyl)-glycerol + CoA</text>
        <dbReference type="Rhea" id="RHEA:55340"/>
        <dbReference type="ChEBI" id="CHEBI:34116"/>
        <dbReference type="ChEBI" id="CHEBI:57287"/>
        <dbReference type="ChEBI" id="CHEBI:57387"/>
        <dbReference type="ChEBI" id="CHEBI:197429"/>
    </reaction>
    <physiologicalReaction direction="left-to-right" evidence="1">
        <dbReference type="Rhea" id="RHEA:55341"/>
    </physiologicalReaction>
</comment>
<comment type="catalytic activity">
    <reaction evidence="1">
        <text>1-O-(9Z-octadecyl)-3-(9Z-octadecenoyl)-glycerol + (9Z)-octadecenoyl-CoA = 1-O-(9Z-octadecenyl)-2,3-di-(9Z-octadecenoyl)glycerol + CoA</text>
        <dbReference type="Rhea" id="RHEA:55344"/>
        <dbReference type="ChEBI" id="CHEBI:57287"/>
        <dbReference type="ChEBI" id="CHEBI:57387"/>
        <dbReference type="ChEBI" id="CHEBI:138735"/>
        <dbReference type="ChEBI" id="CHEBI:197429"/>
    </reaction>
    <physiologicalReaction direction="left-to-right" evidence="1">
        <dbReference type="Rhea" id="RHEA:55345"/>
    </physiologicalReaction>
</comment>
<comment type="catalytic activity">
    <reaction evidence="1">
        <text>1-(9Z-octadecenoyl)-glycerol + (9Z)-octadecenoyl-CoA = 1,2-di-(9Z-octadecenoyl)-glycerol + CoA</text>
        <dbReference type="Rhea" id="RHEA:37915"/>
        <dbReference type="ChEBI" id="CHEBI:52323"/>
        <dbReference type="ChEBI" id="CHEBI:57287"/>
        <dbReference type="ChEBI" id="CHEBI:57387"/>
        <dbReference type="ChEBI" id="CHEBI:75342"/>
    </reaction>
    <physiologicalReaction direction="left-to-right" evidence="1">
        <dbReference type="Rhea" id="RHEA:37916"/>
    </physiologicalReaction>
</comment>
<comment type="catalytic activity">
    <reaction evidence="1">
        <text>1,2-di-(9Z-octadecenoyl)-glycerol + (9Z)-octadecenoate + H(+) = 1,2,3-tri-(9Z-octadecenoyl)-glycerol + H2O</text>
        <dbReference type="Rhea" id="RHEA:38379"/>
        <dbReference type="ChEBI" id="CHEBI:15377"/>
        <dbReference type="ChEBI" id="CHEBI:15378"/>
        <dbReference type="ChEBI" id="CHEBI:30823"/>
        <dbReference type="ChEBI" id="CHEBI:52323"/>
        <dbReference type="ChEBI" id="CHEBI:53753"/>
    </reaction>
    <physiologicalReaction direction="left-to-right" evidence="1">
        <dbReference type="Rhea" id="RHEA:38380"/>
    </physiologicalReaction>
</comment>
<comment type="catalytic activity">
    <reaction evidence="3">
        <text>1-octadecanoyl-2-(5Z,8Z,11Z,14Z-eicosatetraenoyl)-sn-glycerol + (9Z)-octadecenoyl-CoA = 1-octadecanoyl-2-(5Z,8Z,11Z,14Z)-eicosatetraenoyl-3-(9Z)-octadecenoyl-sn-glycerol + CoA</text>
        <dbReference type="Rhea" id="RHEA:38307"/>
        <dbReference type="ChEBI" id="CHEBI:57287"/>
        <dbReference type="ChEBI" id="CHEBI:57387"/>
        <dbReference type="ChEBI" id="CHEBI:75728"/>
        <dbReference type="ChEBI" id="CHEBI:75729"/>
    </reaction>
    <physiologicalReaction direction="left-to-right" evidence="3">
        <dbReference type="Rhea" id="RHEA:38308"/>
    </physiologicalReaction>
</comment>
<comment type="catalytic activity">
    <reaction evidence="3">
        <text>hexadecane-1,2-diol + 2 hexadecanoyl-CoA = 1,2-O,O-dihexadecanoyl-1,2-hexadecanediol + 2 CoA</text>
        <dbReference type="Rhea" id="RHEA:38211"/>
        <dbReference type="ChEBI" id="CHEBI:57287"/>
        <dbReference type="ChEBI" id="CHEBI:57379"/>
        <dbReference type="ChEBI" id="CHEBI:75586"/>
        <dbReference type="ChEBI" id="CHEBI:75608"/>
    </reaction>
    <physiologicalReaction direction="left-to-right" evidence="3">
        <dbReference type="Rhea" id="RHEA:38212"/>
    </physiologicalReaction>
</comment>
<comment type="catalytic activity">
    <reaction evidence="3">
        <text>hexadecane-1,2-diol + hexadecanoyl-CoA = 2-hydroxyhexadecyl hexadecanoate + CoA</text>
        <dbReference type="Rhea" id="RHEA:38171"/>
        <dbReference type="ChEBI" id="CHEBI:57287"/>
        <dbReference type="ChEBI" id="CHEBI:57379"/>
        <dbReference type="ChEBI" id="CHEBI:75586"/>
        <dbReference type="ChEBI" id="CHEBI:75587"/>
    </reaction>
    <physiologicalReaction direction="left-to-right" evidence="3">
        <dbReference type="Rhea" id="RHEA:38172"/>
    </physiologicalReaction>
</comment>
<comment type="catalytic activity">
    <reaction evidence="3">
        <text>2-(9Z-octadecenoyl)-glycerol + hexadecanoyl-CoA = 1-hexadecanoyl-2-(9Z-octadecenoyl)-sn-glycerol + CoA</text>
        <dbReference type="Rhea" id="RHEA:38071"/>
        <dbReference type="ChEBI" id="CHEBI:57287"/>
        <dbReference type="ChEBI" id="CHEBI:57379"/>
        <dbReference type="ChEBI" id="CHEBI:73990"/>
        <dbReference type="ChEBI" id="CHEBI:75466"/>
    </reaction>
    <physiologicalReaction direction="left-to-right" evidence="3">
        <dbReference type="Rhea" id="RHEA:38072"/>
    </physiologicalReaction>
</comment>
<comment type="catalytic activity">
    <reaction evidence="3">
        <text>1,2-di-(9Z-octadecenoyl)-sn-glycerol + hexadecanoyl-CoA = 1,2-di-(9Z)-octadecenoyl-3-hexadecanoyl-sn-glycerol + CoA</text>
        <dbReference type="Rhea" id="RHEA:38163"/>
        <dbReference type="ChEBI" id="CHEBI:52333"/>
        <dbReference type="ChEBI" id="CHEBI:57287"/>
        <dbReference type="ChEBI" id="CHEBI:57379"/>
        <dbReference type="ChEBI" id="CHEBI:75583"/>
    </reaction>
    <physiologicalReaction direction="left-to-right" evidence="3">
        <dbReference type="Rhea" id="RHEA:38164"/>
    </physiologicalReaction>
</comment>
<comment type="catalytic activity">
    <reaction evidence="3">
        <text>hexadecan-1-ol + hexadecanoyl-CoA = hexadecanyl hexadecanoate + CoA</text>
        <dbReference type="Rhea" id="RHEA:38167"/>
        <dbReference type="ChEBI" id="CHEBI:16125"/>
        <dbReference type="ChEBI" id="CHEBI:57287"/>
        <dbReference type="ChEBI" id="CHEBI:57379"/>
        <dbReference type="ChEBI" id="CHEBI:75584"/>
    </reaction>
    <physiologicalReaction direction="left-to-right" evidence="3">
        <dbReference type="Rhea" id="RHEA:38168"/>
    </physiologicalReaction>
</comment>
<comment type="catalytic activity">
    <reaction evidence="3">
        <text>13-cis-retinol + hexadecanoyl-CoA = 13-cis-retinyl hexadecanoate + CoA</text>
        <dbReference type="Rhea" id="RHEA:55296"/>
        <dbReference type="ChEBI" id="CHEBI:45479"/>
        <dbReference type="ChEBI" id="CHEBI:57287"/>
        <dbReference type="ChEBI" id="CHEBI:57379"/>
        <dbReference type="ChEBI" id="CHEBI:138722"/>
    </reaction>
    <physiologicalReaction direction="left-to-right" evidence="3">
        <dbReference type="Rhea" id="RHEA:55297"/>
    </physiologicalReaction>
</comment>
<comment type="catalytic activity">
    <reaction evidence="3">
        <text>1,3-di-(9Z-octadecenoyl)-glycerol + (9Z)-octadecenoyl-CoA = 1,2,3-tri-(9Z-octadecenoyl)-glycerol + CoA</text>
        <dbReference type="Rhea" id="RHEA:38435"/>
        <dbReference type="ChEBI" id="CHEBI:53753"/>
        <dbReference type="ChEBI" id="CHEBI:57287"/>
        <dbReference type="ChEBI" id="CHEBI:57387"/>
        <dbReference type="ChEBI" id="CHEBI:75735"/>
    </reaction>
    <physiologicalReaction direction="left-to-right" evidence="3">
        <dbReference type="Rhea" id="RHEA:38436"/>
    </physiologicalReaction>
</comment>
<comment type="catalytic activity">
    <reaction evidence="3">
        <text>2,3-di-(9Z)-octadecenoyl-sn-glycerol + (9Z)-octadecenoyl-CoA = 1,2,3-tri-(9Z-octadecenoyl)-glycerol + CoA</text>
        <dbReference type="Rhea" id="RHEA:38439"/>
        <dbReference type="ChEBI" id="CHEBI:53753"/>
        <dbReference type="ChEBI" id="CHEBI:57287"/>
        <dbReference type="ChEBI" id="CHEBI:57387"/>
        <dbReference type="ChEBI" id="CHEBI:75824"/>
    </reaction>
    <physiologicalReaction direction="left-to-right" evidence="3">
        <dbReference type="Rhea" id="RHEA:38440"/>
    </physiologicalReaction>
</comment>
<comment type="pathway">
    <text>Lipid metabolism; glycerolipid metabolism.</text>
</comment>
<comment type="subunit">
    <text evidence="1">Homodimer or homotetramer; both forms have similar enzymatic activities.</text>
</comment>
<comment type="subcellular location">
    <subcellularLocation>
        <location evidence="3">Endoplasmic reticulum membrane</location>
        <topology evidence="3">Multi-pass membrane protein</topology>
    </subcellularLocation>
</comment>
<comment type="domain">
    <text evidence="1">The disordered N-terminal region is required for the diacylglycerol O-acyltransferase activity and may regulate enzymatic function via its interaction with the MBOAT fold.</text>
</comment>
<comment type="domain">
    <text evidence="1">The MBOAT fold forms a reaction chamber in the endoplasmic reticulum membrane that encloses the active sites. The reaction chamber has a tunnel to the cytosolic side and its entrance recognizes the hydrophilic CoA motif of an acyl-CoA molecule. The chamber has separate entrances for each of the two substrates, acyl-CoA and 1,2-diacyl-sn-glycerol.</text>
</comment>
<comment type="similarity">
    <text evidence="5">Belongs to the membrane-bound acyltransferase family. Sterol o-acyltransferase subfamily.</text>
</comment>
<gene>
    <name evidence="6" type="primary">Dgat1</name>
    <name type="synonym">Dgat</name>
</gene>
<sequence length="498" mass="56870">MGDRGGAGSSRRRRTGSRVSVQGGSGPKVEEDEVREAAVSPDLGAGGDAPAPAPAPAHTRDKDRQTSVGDGHWELRCHRLQDSLFSSDSGFSNYRGILNWCVVMLILSNARLSLENLIKYGILVDPIQVVSLFLKDPYSWPAPCLIIASNIFIVATFQIEKRLSVGALTEQMGLLLHVVNLATIICFPAAVALLVESITPVGSLFALASYSIIFLKLSSYRDVNLWCRQRRVKAKAVSAGKKVSGAAAQNTVSYPDNLTYRDLYYFIFAPTLCYELNFPRSPRIRKRFLLRRVLEMLFFTQLQVGLIQQWMVPTIQNSMKPFKDMDYSRIIERLLKLAVPNHLIWLIFFYWLFHSCLNAVAELLQFGDREFYRDWWNAESVTYFWQNWNIPVHKWCIRHFYKPMLRLGSNKWMARTGVFWASAFFHEYLVSIPLRMFRLWAFTAMMAQVPLAWIVNRFFQGNYGNAAVWVTLIIGQPVAVLMYVHDYYVLNYDAPVGA</sequence>
<protein>
    <recommendedName>
        <fullName evidence="5">Diacylglycerol O-acyltransferase 1</fullName>
        <ecNumber evidence="1">2.3.1.20</ecNumber>
    </recommendedName>
    <alternativeName>
        <fullName>Acyl-CoA retinol O-fatty-acyltransferase</fullName>
        <shortName>ARAT</shortName>
        <shortName>Retinol O-fatty-acyltransferase</shortName>
        <ecNumber>2.3.1.76</ecNumber>
    </alternativeName>
    <alternativeName>
        <fullName>Diglyceride acyltransferase</fullName>
    </alternativeName>
</protein>
<name>DGAT1_RAT</name>
<keyword id="KW-0012">Acyltransferase</keyword>
<keyword id="KW-0256">Endoplasmic reticulum</keyword>
<keyword id="KW-0443">Lipid metabolism</keyword>
<keyword id="KW-0472">Membrane</keyword>
<keyword id="KW-0597">Phosphoprotein</keyword>
<keyword id="KW-1185">Reference proteome</keyword>
<keyword id="KW-0808">Transferase</keyword>
<keyword id="KW-0812">Transmembrane</keyword>
<keyword id="KW-1133">Transmembrane helix</keyword>
<proteinExistence type="evidence at transcript level"/>
<feature type="chain" id="PRO_0000207656" description="Diacylglycerol O-acyltransferase 1">
    <location>
        <begin position="1"/>
        <end position="498"/>
    </location>
</feature>
<feature type="topological domain" description="Cytoplasmic" evidence="5">
    <location>
        <begin position="1"/>
        <end position="92"/>
    </location>
</feature>
<feature type="transmembrane region" description="Helical; Name=1" evidence="1">
    <location>
        <begin position="93"/>
        <end position="127"/>
    </location>
</feature>
<feature type="topological domain" description="Lumenal" evidence="5">
    <location>
        <begin position="128"/>
        <end position="139"/>
    </location>
</feature>
<feature type="transmembrane region" description="Helical; Name=2" evidence="1">
    <location>
        <begin position="140"/>
        <end position="165"/>
    </location>
</feature>
<feature type="topological domain" description="Cytoplasmic" evidence="5">
    <location>
        <begin position="166"/>
        <end position="170"/>
    </location>
</feature>
<feature type="transmembrane region" description="Helical; Name=3" evidence="1">
    <location>
        <begin position="171"/>
        <end position="193"/>
    </location>
</feature>
<feature type="topological domain" description="Lumenal" evidence="5">
    <location>
        <begin position="194"/>
        <end position="200"/>
    </location>
</feature>
<feature type="transmembrane region" description="Helical; Name=4" evidence="1">
    <location>
        <begin position="201"/>
        <end position="232"/>
    </location>
</feature>
<feature type="topological domain" description="Cytoplasmic" evidence="5">
    <location>
        <begin position="233"/>
        <end position="284"/>
    </location>
</feature>
<feature type="transmembrane region" description="Helical; Name=5" evidence="1">
    <location>
        <begin position="285"/>
        <end position="319"/>
    </location>
</feature>
<feature type="topological domain" description="Lumenal" evidence="5">
    <location>
        <begin position="320"/>
        <end position="326"/>
    </location>
</feature>
<feature type="transmembrane region" description="Helical; Name=6" evidence="1">
    <location>
        <begin position="327"/>
        <end position="364"/>
    </location>
</feature>
<feature type="topological domain" description="Cytoplasmic" evidence="5">
    <location>
        <begin position="365"/>
        <end position="410"/>
    </location>
</feature>
<feature type="transmembrane region" description="Helical; Name=7" evidence="1">
    <location>
        <begin position="411"/>
        <end position="431"/>
    </location>
</feature>
<feature type="topological domain" description="Lumenal" evidence="5">
    <location>
        <begin position="432"/>
        <end position="439"/>
    </location>
</feature>
<feature type="transmembrane region" description="Helical; Name=8" evidence="1">
    <location>
        <begin position="440"/>
        <end position="458"/>
    </location>
</feature>
<feature type="topological domain" description="Cytoplasmic" evidence="5">
    <location>
        <begin position="459"/>
        <end position="460"/>
    </location>
</feature>
<feature type="transmembrane region" description="Helical; Name=9" evidence="1">
    <location>
        <begin position="461"/>
        <end position="492"/>
    </location>
</feature>
<feature type="topological domain" description="Lumenal" evidence="5">
    <location>
        <begin position="493"/>
        <end position="498"/>
    </location>
</feature>
<feature type="region of interest" description="Involved in homomerization" evidence="3">
    <location>
        <begin position="1"/>
        <end position="96"/>
    </location>
</feature>
<feature type="region of interest" description="Disordered" evidence="1">
    <location>
        <begin position="1"/>
        <end position="66"/>
    </location>
</feature>
<feature type="region of interest" description="Extracellular loop 1 (EL1)" evidence="1">
    <location>
        <begin position="128"/>
        <end position="139"/>
    </location>
</feature>
<feature type="region of interest" description="MBOAT fold" evidence="1">
    <location>
        <begin position="140"/>
        <end position="498"/>
    </location>
</feature>
<feature type="region of interest" description="Intracellular loop 1 (IL1)" evidence="1">
    <location>
        <begin position="235"/>
        <end position="287"/>
    </location>
</feature>
<feature type="region of interest" description="Intracellular loop 2 (IL2)" evidence="1">
    <location>
        <begin position="365"/>
        <end position="410"/>
    </location>
</feature>
<feature type="region of interest" description="Amphipathic helix (AH)" evidence="1">
    <location>
        <begin position="391"/>
        <end position="405"/>
    </location>
</feature>
<feature type="short sequence motif" description="FYXDWWN motif" evidence="1">
    <location>
        <begin position="371"/>
        <end position="377"/>
    </location>
</feature>
<feature type="compositionally biased region" description="Basic and acidic residues" evidence="4">
    <location>
        <begin position="58"/>
        <end position="68"/>
    </location>
</feature>
<feature type="active site" evidence="3">
    <location>
        <position position="426"/>
    </location>
</feature>
<feature type="binding site" evidence="1">
    <location>
        <begin position="385"/>
        <end position="393"/>
    </location>
    <ligand>
        <name>an acyl-CoA</name>
        <dbReference type="ChEBI" id="CHEBI:58342"/>
    </ligand>
</feature>
<feature type="binding site" evidence="1">
    <location>
        <position position="401"/>
    </location>
    <ligand>
        <name>an acyl-CoA</name>
        <dbReference type="ChEBI" id="CHEBI:58342"/>
    </ligand>
</feature>
<feature type="binding site" evidence="1">
    <location>
        <position position="415"/>
    </location>
    <ligand>
        <name>an acyl-CoA</name>
        <dbReference type="ChEBI" id="CHEBI:58342"/>
    </ligand>
</feature>
<feature type="binding site" evidence="1">
    <location>
        <position position="488"/>
    </location>
    <ligand>
        <name>an acyl-CoA</name>
        <dbReference type="ChEBI" id="CHEBI:58342"/>
    </ligand>
</feature>
<feature type="site" description="Important for catalytic activity" evidence="1">
    <location>
        <position position="427"/>
    </location>
</feature>
<feature type="modified residue" description="Phosphoserine" evidence="1">
    <location>
        <position position="20"/>
    </location>
</feature>
<reference key="1">
    <citation type="submission" date="2000-08" db="EMBL/GenBank/DDBJ databases">
        <title>Cloning of a rat novel gene encoding an acyl CoA:diacylglycerol acyltransferase, a key enzyme in triacylglycerol synthesis.</title>
        <authorList>
            <person name="Zhang Y."/>
            <person name="Yang Q."/>
            <person name="Basse P."/>
            <person name="Rice P."/>
        </authorList>
    </citation>
    <scope>NUCLEOTIDE SEQUENCE [MRNA]</scope>
    <source>
        <strain>Brown Norway</strain>
        <tissue>Brain</tissue>
    </source>
</reference>
<organism>
    <name type="scientific">Rattus norvegicus</name>
    <name type="common">Rat</name>
    <dbReference type="NCBI Taxonomy" id="10116"/>
    <lineage>
        <taxon>Eukaryota</taxon>
        <taxon>Metazoa</taxon>
        <taxon>Chordata</taxon>
        <taxon>Craniata</taxon>
        <taxon>Vertebrata</taxon>
        <taxon>Euteleostomi</taxon>
        <taxon>Mammalia</taxon>
        <taxon>Eutheria</taxon>
        <taxon>Euarchontoglires</taxon>
        <taxon>Glires</taxon>
        <taxon>Rodentia</taxon>
        <taxon>Myomorpha</taxon>
        <taxon>Muroidea</taxon>
        <taxon>Muridae</taxon>
        <taxon>Murinae</taxon>
        <taxon>Rattus</taxon>
    </lineage>
</organism>
<evidence type="ECO:0000250" key="1">
    <source>
        <dbReference type="UniProtKB" id="O75907"/>
    </source>
</evidence>
<evidence type="ECO:0000250" key="2">
    <source>
        <dbReference type="UniProtKB" id="Q8MK44"/>
    </source>
</evidence>
<evidence type="ECO:0000250" key="3">
    <source>
        <dbReference type="UniProtKB" id="Q9Z2A7"/>
    </source>
</evidence>
<evidence type="ECO:0000256" key="4">
    <source>
        <dbReference type="SAM" id="MobiDB-lite"/>
    </source>
</evidence>
<evidence type="ECO:0000305" key="5"/>
<evidence type="ECO:0000312" key="6">
    <source>
        <dbReference type="RGD" id="628673"/>
    </source>
</evidence>